<reference key="1">
    <citation type="journal article" date="2007" name="Nat. Biotechnol.">
        <title>Comparative analysis of the complete genome sequence of the plant growth-promoting bacterium Bacillus amyloliquefaciens FZB42.</title>
        <authorList>
            <person name="Chen X.H."/>
            <person name="Koumoutsi A."/>
            <person name="Scholz R."/>
            <person name="Eisenreich A."/>
            <person name="Schneider K."/>
            <person name="Heinemeyer I."/>
            <person name="Morgenstern B."/>
            <person name="Voss B."/>
            <person name="Hess W.R."/>
            <person name="Reva O."/>
            <person name="Junge H."/>
            <person name="Voigt B."/>
            <person name="Jungblut P.R."/>
            <person name="Vater J."/>
            <person name="Suessmuth R."/>
            <person name="Liesegang H."/>
            <person name="Strittmatter A."/>
            <person name="Gottschalk G."/>
            <person name="Borriss R."/>
        </authorList>
    </citation>
    <scope>NUCLEOTIDE SEQUENCE [LARGE SCALE GENOMIC DNA]</scope>
    <source>
        <strain>DSM 23117 / BGSC 10A6 / LMG 26770 / FZB42</strain>
    </source>
</reference>
<organism>
    <name type="scientific">Bacillus velezensis (strain DSM 23117 / BGSC 10A6 / LMG 26770 / FZB42)</name>
    <name type="common">Bacillus amyloliquefaciens subsp. plantarum</name>
    <dbReference type="NCBI Taxonomy" id="326423"/>
    <lineage>
        <taxon>Bacteria</taxon>
        <taxon>Bacillati</taxon>
        <taxon>Bacillota</taxon>
        <taxon>Bacilli</taxon>
        <taxon>Bacillales</taxon>
        <taxon>Bacillaceae</taxon>
        <taxon>Bacillus</taxon>
        <taxon>Bacillus amyloliquefaciens group</taxon>
    </lineage>
</organism>
<proteinExistence type="inferred from homology"/>
<evidence type="ECO:0000255" key="1">
    <source>
        <dbReference type="HAMAP-Rule" id="MF_00707"/>
    </source>
</evidence>
<evidence type="ECO:0000305" key="2"/>
<accession>A7Z780</accession>
<gene>
    <name type="ordered locus">RBAM_024960</name>
</gene>
<feature type="chain" id="PRO_0000366294" description="UPF0735 ACT domain-containing protein RBAM_024960">
    <location>
        <begin position="1"/>
        <end position="147"/>
    </location>
</feature>
<feature type="domain" description="ACT" evidence="1">
    <location>
        <begin position="70"/>
        <end position="145"/>
    </location>
</feature>
<protein>
    <recommendedName>
        <fullName evidence="1">UPF0735 ACT domain-containing protein RBAM_024960</fullName>
    </recommendedName>
</protein>
<name>Y2496_BACVZ</name>
<sequence>MKEETFYLVREDVLPDAMRKTLEVKKLLDRKKAESVADAVQKVDLSRSAFYKYRDAVFPFYTMVKEQIITLFFHLEDRSGALSQLLQAVADSGSNVLSIHQTIPLQGRANVTLSISTSAMEENIHTLMNKLRKFDFIEKVEILGSGA</sequence>
<dbReference type="EMBL" id="CP000560">
    <property type="protein sequence ID" value="ABS74856.1"/>
    <property type="status" value="ALT_INIT"/>
    <property type="molecule type" value="Genomic_DNA"/>
</dbReference>
<dbReference type="SMR" id="A7Z780"/>
<dbReference type="GeneID" id="93081638"/>
<dbReference type="KEGG" id="bay:RBAM_024960"/>
<dbReference type="HOGENOM" id="CLU_128147_0_0_9"/>
<dbReference type="Proteomes" id="UP000001120">
    <property type="component" value="Chromosome"/>
</dbReference>
<dbReference type="CDD" id="cd04888">
    <property type="entry name" value="ACT_PheB-BS"/>
    <property type="match status" value="1"/>
</dbReference>
<dbReference type="Gene3D" id="3.30.70.260">
    <property type="match status" value="1"/>
</dbReference>
<dbReference type="HAMAP" id="MF_00707">
    <property type="entry name" value="UPF0735"/>
    <property type="match status" value="1"/>
</dbReference>
<dbReference type="InterPro" id="IPR045865">
    <property type="entry name" value="ACT-like_dom_sf"/>
</dbReference>
<dbReference type="InterPro" id="IPR002912">
    <property type="entry name" value="ACT_dom"/>
</dbReference>
<dbReference type="InterPro" id="IPR008310">
    <property type="entry name" value="UPF0735_ACT_dom-cont"/>
</dbReference>
<dbReference type="NCBIfam" id="NF003361">
    <property type="entry name" value="PRK04435.1"/>
    <property type="match status" value="1"/>
</dbReference>
<dbReference type="Pfam" id="PF01842">
    <property type="entry name" value="ACT"/>
    <property type="match status" value="1"/>
</dbReference>
<dbReference type="PIRSF" id="PIRSF025624">
    <property type="entry name" value="ACT_PheB"/>
    <property type="match status" value="1"/>
</dbReference>
<dbReference type="SUPFAM" id="SSF55021">
    <property type="entry name" value="ACT-like"/>
    <property type="match status" value="1"/>
</dbReference>
<dbReference type="PROSITE" id="PS51671">
    <property type="entry name" value="ACT"/>
    <property type="match status" value="1"/>
</dbReference>
<comment type="similarity">
    <text evidence="1">Belongs to the UPF0735 family.</text>
</comment>
<comment type="sequence caution" evidence="2">
    <conflict type="erroneous initiation">
        <sequence resource="EMBL-CDS" id="ABS74856"/>
    </conflict>
</comment>